<comment type="function">
    <text evidence="1">Catalyzes the transfer of the diacylglyceryl group from phosphatidylglycerol to the sulfhydryl group of the N-terminal cysteine of a prolipoprotein, the first step in the formation of mature lipoproteins.</text>
</comment>
<comment type="catalytic activity">
    <reaction evidence="1">
        <text>L-cysteinyl-[prolipoprotein] + a 1,2-diacyl-sn-glycero-3-phospho-(1'-sn-glycerol) = an S-1,2-diacyl-sn-glyceryl-L-cysteinyl-[prolipoprotein] + sn-glycerol 1-phosphate + H(+)</text>
        <dbReference type="Rhea" id="RHEA:56712"/>
        <dbReference type="Rhea" id="RHEA-COMP:14679"/>
        <dbReference type="Rhea" id="RHEA-COMP:14680"/>
        <dbReference type="ChEBI" id="CHEBI:15378"/>
        <dbReference type="ChEBI" id="CHEBI:29950"/>
        <dbReference type="ChEBI" id="CHEBI:57685"/>
        <dbReference type="ChEBI" id="CHEBI:64716"/>
        <dbReference type="ChEBI" id="CHEBI:140658"/>
        <dbReference type="EC" id="2.5.1.145"/>
    </reaction>
</comment>
<comment type="pathway">
    <text evidence="1">Protein modification; lipoprotein biosynthesis (diacylglyceryl transfer).</text>
</comment>
<comment type="subcellular location">
    <subcellularLocation>
        <location evidence="1">Cell inner membrane</location>
        <topology evidence="1">Multi-pass membrane protein</topology>
    </subcellularLocation>
</comment>
<comment type="similarity">
    <text evidence="1">Belongs to the Lgt family.</text>
</comment>
<sequence>MNSNYLLLPHFDPSIFTLGDSNIGLRWYGLMYLLGFVFARWLAVRRANRPNSGWTVDQVDTLLFNGFMGVFIGGRVGDVFFYNLDHFLQEPLYLFRVWEGGMSFHGGLIGVIVAMIWTSYSQKRNFWQTADFVAPLIPFGLGLGRIGNFINLELWGRETNVPWAMIFPNDPLLLPRHPSQLYEAFLEGLVLFAILNIFIKKPRPMASVAGLFLIGYGVFRFIVEYVREPEVENFFGIITRGQALCLPMIIGGAFIMAWAYSRKSAVIK</sequence>
<evidence type="ECO:0000255" key="1">
    <source>
        <dbReference type="HAMAP-Rule" id="MF_01147"/>
    </source>
</evidence>
<proteinExistence type="inferred from homology"/>
<gene>
    <name evidence="1" type="primary">lgt</name>
    <name type="ordered locus">NTHI1071</name>
</gene>
<accession>Q4QM05</accession>
<keyword id="KW-0997">Cell inner membrane</keyword>
<keyword id="KW-1003">Cell membrane</keyword>
<keyword id="KW-0472">Membrane</keyword>
<keyword id="KW-0808">Transferase</keyword>
<keyword id="KW-0812">Transmembrane</keyword>
<keyword id="KW-1133">Transmembrane helix</keyword>
<organism>
    <name type="scientific">Haemophilus influenzae (strain 86-028NP)</name>
    <dbReference type="NCBI Taxonomy" id="281310"/>
    <lineage>
        <taxon>Bacteria</taxon>
        <taxon>Pseudomonadati</taxon>
        <taxon>Pseudomonadota</taxon>
        <taxon>Gammaproteobacteria</taxon>
        <taxon>Pasteurellales</taxon>
        <taxon>Pasteurellaceae</taxon>
        <taxon>Haemophilus</taxon>
    </lineage>
</organism>
<protein>
    <recommendedName>
        <fullName evidence="1">Phosphatidylglycerol--prolipoprotein diacylglyceryl transferase</fullName>
        <ecNumber evidence="1">2.5.1.145</ecNumber>
    </recommendedName>
</protein>
<feature type="chain" id="PRO_1000053438" description="Phosphatidylglycerol--prolipoprotein diacylglyceryl transferase">
    <location>
        <begin position="1"/>
        <end position="268"/>
    </location>
</feature>
<feature type="transmembrane region" description="Helical" evidence="1">
    <location>
        <begin position="23"/>
        <end position="43"/>
    </location>
</feature>
<feature type="transmembrane region" description="Helical" evidence="1">
    <location>
        <begin position="62"/>
        <end position="82"/>
    </location>
</feature>
<feature type="transmembrane region" description="Helical" evidence="1">
    <location>
        <begin position="97"/>
        <end position="117"/>
    </location>
</feature>
<feature type="transmembrane region" description="Helical" evidence="1">
    <location>
        <begin position="132"/>
        <end position="152"/>
    </location>
</feature>
<feature type="transmembrane region" description="Helical" evidence="1">
    <location>
        <begin position="179"/>
        <end position="199"/>
    </location>
</feature>
<feature type="transmembrane region" description="Helical" evidence="1">
    <location>
        <begin position="206"/>
        <end position="226"/>
    </location>
</feature>
<feature type="transmembrane region" description="Helical" evidence="1">
    <location>
        <begin position="241"/>
        <end position="261"/>
    </location>
</feature>
<feature type="binding site" evidence="1">
    <location>
        <position position="145"/>
    </location>
    <ligand>
        <name>a 1,2-diacyl-sn-glycero-3-phospho-(1'-sn-glycerol)</name>
        <dbReference type="ChEBI" id="CHEBI:64716"/>
    </ligand>
</feature>
<name>LGT_HAEI8</name>
<reference key="1">
    <citation type="journal article" date="2005" name="J. Bacteriol.">
        <title>Genomic sequence of an otitis media isolate of nontypeable Haemophilus influenzae: comparative study with H. influenzae serotype d, strain KW20.</title>
        <authorList>
            <person name="Harrison A."/>
            <person name="Dyer D.W."/>
            <person name="Gillaspy A."/>
            <person name="Ray W.C."/>
            <person name="Mungur R."/>
            <person name="Carson M.B."/>
            <person name="Zhong H."/>
            <person name="Gipson J."/>
            <person name="Gipson M."/>
            <person name="Johnson L.S."/>
            <person name="Lewis L."/>
            <person name="Bakaletz L.O."/>
            <person name="Munson R.S. Jr."/>
        </authorList>
    </citation>
    <scope>NUCLEOTIDE SEQUENCE [LARGE SCALE GENOMIC DNA]</scope>
    <source>
        <strain>86-028NP</strain>
    </source>
</reference>
<dbReference type="EC" id="2.5.1.145" evidence="1"/>
<dbReference type="EMBL" id="CP000057">
    <property type="protein sequence ID" value="AAX87942.1"/>
    <property type="molecule type" value="Genomic_DNA"/>
</dbReference>
<dbReference type="RefSeq" id="WP_011272278.1">
    <property type="nucleotide sequence ID" value="NC_007146.2"/>
</dbReference>
<dbReference type="SMR" id="Q4QM05"/>
<dbReference type="GeneID" id="93219940"/>
<dbReference type="KEGG" id="hit:NTHI1071"/>
<dbReference type="HOGENOM" id="CLU_013386_1_0_6"/>
<dbReference type="UniPathway" id="UPA00664"/>
<dbReference type="Proteomes" id="UP000002525">
    <property type="component" value="Chromosome"/>
</dbReference>
<dbReference type="GO" id="GO:0005886">
    <property type="term" value="C:plasma membrane"/>
    <property type="evidence" value="ECO:0007669"/>
    <property type="project" value="UniProtKB-SubCell"/>
</dbReference>
<dbReference type="GO" id="GO:0008961">
    <property type="term" value="F:phosphatidylglycerol-prolipoprotein diacylglyceryl transferase activity"/>
    <property type="evidence" value="ECO:0007669"/>
    <property type="project" value="UniProtKB-UniRule"/>
</dbReference>
<dbReference type="GO" id="GO:0042158">
    <property type="term" value="P:lipoprotein biosynthetic process"/>
    <property type="evidence" value="ECO:0007669"/>
    <property type="project" value="UniProtKB-UniRule"/>
</dbReference>
<dbReference type="HAMAP" id="MF_01147">
    <property type="entry name" value="Lgt"/>
    <property type="match status" value="1"/>
</dbReference>
<dbReference type="InterPro" id="IPR001640">
    <property type="entry name" value="Lgt"/>
</dbReference>
<dbReference type="NCBIfam" id="TIGR00544">
    <property type="entry name" value="lgt"/>
    <property type="match status" value="1"/>
</dbReference>
<dbReference type="PANTHER" id="PTHR30589:SF0">
    <property type="entry name" value="PHOSPHATIDYLGLYCEROL--PROLIPOPROTEIN DIACYLGLYCERYL TRANSFERASE"/>
    <property type="match status" value="1"/>
</dbReference>
<dbReference type="PANTHER" id="PTHR30589">
    <property type="entry name" value="PROLIPOPROTEIN DIACYLGLYCERYL TRANSFERASE"/>
    <property type="match status" value="1"/>
</dbReference>
<dbReference type="Pfam" id="PF01790">
    <property type="entry name" value="LGT"/>
    <property type="match status" value="1"/>
</dbReference>
<dbReference type="PROSITE" id="PS01311">
    <property type="entry name" value="LGT"/>
    <property type="match status" value="1"/>
</dbReference>